<comment type="function">
    <text evidence="2 3 4">Participates in the inhibition of the host immune response. Prevents host NK cell-mediated lysis of the infected cell by preventing the KLRK1 ligand 3/ULBP3 trafficking to the cell surface. Also retains another KLRK1 ligand, MHC class I-related chain A/MICA, in the Golgi apparatus to avoid its surface expression.</text>
</comment>
<comment type="subunit">
    <text evidence="3 4">Interacts with host MICA and ULBP3.</text>
</comment>
<comment type="subcellular location">
    <subcellularLocation>
        <location evidence="3">Host endoplasmic reticulum membrane</location>
        <topology evidence="3">Single-pass membrane protein</topology>
    </subcellularLocation>
    <subcellularLocation>
        <location evidence="3">Host Golgi apparatus membrane</location>
        <topology evidence="3">Single-pass membrane protein</topology>
    </subcellularLocation>
</comment>
<proteinExistence type="evidence at protein level"/>
<gene>
    <name type="primary">UL142</name>
</gene>
<name>UL142_HCMVM</name>
<reference key="1">
    <citation type="journal article" date="2004" name="J. Gen. Virol.">
        <title>Genetic content of wild-type human cytomegalovirus.</title>
        <authorList>
            <person name="Dolan A."/>
            <person name="Cunningham C."/>
            <person name="Hector R.D."/>
            <person name="Hassan-Walker A.F."/>
            <person name="Lee L."/>
            <person name="Addison C."/>
            <person name="Dargan D.J."/>
            <person name="McGeoch D.J."/>
            <person name="Gatherer D."/>
            <person name="Emery V.C."/>
            <person name="Griffiths P.D."/>
            <person name="Sinzger C."/>
            <person name="McSharry B.P."/>
            <person name="Wilkinson G.W.G."/>
            <person name="Davison A.J."/>
        </authorList>
    </citation>
    <scope>NUCLEOTIDE SEQUENCE [LARGE SCALE GENOMIC DNA]</scope>
</reference>
<reference key="2">
    <citation type="journal article" date="2005" name="J. Immunol.">
        <title>Human cytomegalovirus encodes an MHC class I-like molecule (UL142) that functions to inhibit NK cell lysis.</title>
        <authorList>
            <person name="Wills M.R."/>
            <person name="Ashiru O."/>
            <person name="Reeves M.B."/>
            <person name="Okecha G."/>
            <person name="Trowsdale J."/>
            <person name="Tomasec P."/>
            <person name="Wilkinson G.W."/>
            <person name="Sinclair J."/>
            <person name="Sissons J.G."/>
        </authorList>
    </citation>
    <scope>FUNCTION</scope>
</reference>
<reference key="3">
    <citation type="journal article" date="2009" name="J. Virol.">
        <title>NKG2D ligand MICA is retained in the cis-Golgi apparatus by human cytomegalovirus protein UL142.</title>
        <authorList>
            <person name="Ashiru O."/>
            <person name="Bennett N.J."/>
            <person name="Boyle L.H."/>
            <person name="Thomas M."/>
            <person name="Trowsdale J."/>
            <person name="Wills M.R."/>
        </authorList>
    </citation>
    <scope>FUNCTION</scope>
    <scope>INTERACTION WITH HOST MICA</scope>
    <scope>SUBCELLULAR LOCATION</scope>
</reference>
<reference key="4">
    <citation type="journal article" date="2010" name="J. Immunol.">
        <title>Intracellular sequestration of the NKG2D ligand ULBP3 by human cytomegalovirus.</title>
        <authorList>
            <person name="Bennett N.J."/>
            <person name="Ashiru O."/>
            <person name="Morgan F.J."/>
            <person name="Pang Y."/>
            <person name="Okecha G."/>
            <person name="Eagle R.A."/>
            <person name="Trowsdale J."/>
            <person name="Sissons J.G."/>
            <person name="Wills M.R."/>
        </authorList>
    </citation>
    <scope>FUNCTION</scope>
    <scope>INTERACTION WITH HOST ULBP3</scope>
</reference>
<feature type="signal peptide" evidence="1">
    <location>
        <begin position="1"/>
        <end position="19"/>
    </location>
</feature>
<feature type="chain" id="PRO_0000418303" description="Membrane glycoprotein UL142">
    <location>
        <begin position="20"/>
        <end position="305"/>
    </location>
</feature>
<feature type="topological domain" description="Lumenal" evidence="1">
    <location>
        <begin position="20"/>
        <end position="270"/>
    </location>
</feature>
<feature type="transmembrane region" description="Helical" evidence="1">
    <location>
        <begin position="271"/>
        <end position="288"/>
    </location>
</feature>
<feature type="topological domain" description="Cytoplasmic" evidence="1">
    <location>
        <begin position="289"/>
        <end position="305"/>
    </location>
</feature>
<organismHost>
    <name type="scientific">Homo sapiens</name>
    <name type="common">Human</name>
    <dbReference type="NCBI Taxonomy" id="9606"/>
</organismHost>
<protein>
    <recommendedName>
        <fullName>Membrane glycoprotein UL142</fullName>
    </recommendedName>
</protein>
<evidence type="ECO:0000255" key="1"/>
<evidence type="ECO:0000269" key="2">
    <source>
    </source>
</evidence>
<evidence type="ECO:0000269" key="3">
    <source>
    </source>
</evidence>
<evidence type="ECO:0000269" key="4">
    <source>
    </source>
</evidence>
<sequence length="305" mass="34626">MRIEWACWLFGYFVSSVGSERSLSYRYHLESNSSANVVCNGNISVFVNGTLGVRYNITVGISSSLLIGHLTIQTLESWFTPWVQNKSYSKQPLSTTETLYNIDSENIHRVSQYFHTRWIKSLQENHTCDLTNSTPTYTYQANVNNTNYLTLTSSGWQDRLNYTAINSTHFNLTESNITSIHKYLNTTCIERLRNYTLEPVYTTAVPQNVTPEHAITTLYTTPPNAITIKDTTQSHTVQTPSFNDTHNVTEHTLNISYVLSQKTNNTTSPWVYAIPMGATATIGAGLYIGKHFTPVKFVYEVWRGQ</sequence>
<organism>
    <name type="scientific">Human cytomegalovirus (strain Merlin)</name>
    <name type="common">HHV-5</name>
    <name type="synonym">Human herpesvirus 5</name>
    <dbReference type="NCBI Taxonomy" id="295027"/>
    <lineage>
        <taxon>Viruses</taxon>
        <taxon>Duplodnaviria</taxon>
        <taxon>Heunggongvirae</taxon>
        <taxon>Peploviricota</taxon>
        <taxon>Herviviricetes</taxon>
        <taxon>Herpesvirales</taxon>
        <taxon>Orthoherpesviridae</taxon>
        <taxon>Betaherpesvirinae</taxon>
        <taxon>Cytomegalovirus</taxon>
        <taxon>Cytomegalovirus humanbeta5</taxon>
        <taxon>Human cytomegalovirus</taxon>
    </lineage>
</organism>
<keyword id="KW-1038">Host endoplasmic reticulum</keyword>
<keyword id="KW-1040">Host Golgi apparatus</keyword>
<keyword id="KW-1043">Host membrane</keyword>
<keyword id="KW-0472">Membrane</keyword>
<keyword id="KW-1185">Reference proteome</keyword>
<keyword id="KW-0732">Signal</keyword>
<keyword id="KW-0812">Transmembrane</keyword>
<keyword id="KW-1133">Transmembrane helix</keyword>
<accession>F5HHH2</accession>
<dbReference type="EMBL" id="AY446894">
    <property type="protein sequence ID" value="AAR31678.1"/>
    <property type="molecule type" value="Genomic_DNA"/>
</dbReference>
<dbReference type="RefSeq" id="YP_081574.1">
    <property type="nucleotide sequence ID" value="NC_006273.2"/>
</dbReference>
<dbReference type="DNASU" id="3077552"/>
<dbReference type="GeneID" id="3077552"/>
<dbReference type="KEGG" id="vg:3077552"/>
<dbReference type="Proteomes" id="UP000000938">
    <property type="component" value="Segment"/>
</dbReference>
<dbReference type="GO" id="GO:0044167">
    <property type="term" value="C:host cell endoplasmic reticulum membrane"/>
    <property type="evidence" value="ECO:0007669"/>
    <property type="project" value="UniProtKB-SubCell"/>
</dbReference>
<dbReference type="GO" id="GO:0044178">
    <property type="term" value="C:host cell Golgi membrane"/>
    <property type="evidence" value="ECO:0007669"/>
    <property type="project" value="UniProtKB-SubCell"/>
</dbReference>
<dbReference type="GO" id="GO:0016020">
    <property type="term" value="C:membrane"/>
    <property type="evidence" value="ECO:0007669"/>
    <property type="project" value="UniProtKB-KW"/>
</dbReference>
<dbReference type="Gene3D" id="3.30.500.10">
    <property type="entry name" value="MHC class I-like antigen recognition-like"/>
    <property type="match status" value="1"/>
</dbReference>
<dbReference type="InterPro" id="IPR037055">
    <property type="entry name" value="MHC_I-like_Ag-recog_sf"/>
</dbReference>
<dbReference type="InterPro" id="IPR011162">
    <property type="entry name" value="MHC_I/II-like_Ag-recog"/>
</dbReference>
<dbReference type="SUPFAM" id="SSF54452">
    <property type="entry name" value="MHC antigen-recognition domain"/>
    <property type="match status" value="1"/>
</dbReference>